<dbReference type="EMBL" id="Y10690">
    <property type="protein sequence ID" value="CAA71693.1"/>
    <property type="molecule type" value="mRNA"/>
</dbReference>
<dbReference type="SMR" id="O77726"/>
<dbReference type="GlyCosmos" id="O77726">
    <property type="glycosylation" value="4 sites, No reported glycans"/>
</dbReference>
<dbReference type="GO" id="GO:0062023">
    <property type="term" value="C:collagen-containing extracellular matrix"/>
    <property type="evidence" value="ECO:0000250"/>
    <property type="project" value="UniProtKB"/>
</dbReference>
<dbReference type="GO" id="GO:0035805">
    <property type="term" value="C:egg coat"/>
    <property type="evidence" value="ECO:0000250"/>
    <property type="project" value="UniProtKB"/>
</dbReference>
<dbReference type="GO" id="GO:0005783">
    <property type="term" value="C:endoplasmic reticulum"/>
    <property type="evidence" value="ECO:0000250"/>
    <property type="project" value="UniProtKB"/>
</dbReference>
<dbReference type="GO" id="GO:0005576">
    <property type="term" value="C:extracellular region"/>
    <property type="evidence" value="ECO:0007669"/>
    <property type="project" value="UniProtKB-KW"/>
</dbReference>
<dbReference type="GO" id="GO:0005771">
    <property type="term" value="C:multivesicular body"/>
    <property type="evidence" value="ECO:0000250"/>
    <property type="project" value="UniProtKB"/>
</dbReference>
<dbReference type="GO" id="GO:0005886">
    <property type="term" value="C:plasma membrane"/>
    <property type="evidence" value="ECO:0000250"/>
    <property type="project" value="UniProtKB"/>
</dbReference>
<dbReference type="GO" id="GO:0032190">
    <property type="term" value="F:acrosin binding"/>
    <property type="evidence" value="ECO:0007669"/>
    <property type="project" value="TreeGrafter"/>
</dbReference>
<dbReference type="GO" id="GO:0035804">
    <property type="term" value="F:structural constituent of egg coat"/>
    <property type="evidence" value="ECO:0000250"/>
    <property type="project" value="UniProtKB"/>
</dbReference>
<dbReference type="GO" id="GO:0007339">
    <property type="term" value="P:binding of sperm to zona pellucida"/>
    <property type="evidence" value="ECO:0000250"/>
    <property type="project" value="UniProtKB"/>
</dbReference>
<dbReference type="GO" id="GO:0060468">
    <property type="term" value="P:prevention of polyspermy"/>
    <property type="evidence" value="ECO:0000250"/>
    <property type="project" value="UniProtKB"/>
</dbReference>
<dbReference type="FunFam" id="2.60.40.3210:FF:000006">
    <property type="entry name" value="Zona pellucida sperm-binding protein 2"/>
    <property type="match status" value="1"/>
</dbReference>
<dbReference type="FunFam" id="2.60.40.4100:FF:000004">
    <property type="entry name" value="Zona pellucida sperm-binding protein 2"/>
    <property type="match status" value="1"/>
</dbReference>
<dbReference type="Gene3D" id="2.60.40.4100">
    <property type="entry name" value="Zona pellucida, ZP-C domain"/>
    <property type="match status" value="1"/>
</dbReference>
<dbReference type="Gene3D" id="2.60.40.3210">
    <property type="entry name" value="Zona pellucida, ZP-N domain"/>
    <property type="match status" value="1"/>
</dbReference>
<dbReference type="InterPro" id="IPR051148">
    <property type="entry name" value="Zona_Pellucida_Domain_gp"/>
</dbReference>
<dbReference type="InterPro" id="IPR055355">
    <property type="entry name" value="ZP-C"/>
</dbReference>
<dbReference type="InterPro" id="IPR042235">
    <property type="entry name" value="ZP-C_dom"/>
</dbReference>
<dbReference type="InterPro" id="IPR055356">
    <property type="entry name" value="ZP-N"/>
</dbReference>
<dbReference type="InterPro" id="IPR048290">
    <property type="entry name" value="ZP_chr"/>
</dbReference>
<dbReference type="InterPro" id="IPR001507">
    <property type="entry name" value="ZP_dom"/>
</dbReference>
<dbReference type="InterPro" id="IPR017977">
    <property type="entry name" value="ZP_dom_CS"/>
</dbReference>
<dbReference type="PANTHER" id="PTHR23343">
    <property type="entry name" value="ZONA PELLUCIDA SPERM-BINDING PROTEIN"/>
    <property type="match status" value="1"/>
</dbReference>
<dbReference type="PANTHER" id="PTHR23343:SF4">
    <property type="entry name" value="ZONA PELLUCIDA SPERM-BINDING PROTEIN 2"/>
    <property type="match status" value="1"/>
</dbReference>
<dbReference type="Pfam" id="PF23736">
    <property type="entry name" value="Ig_ZP2"/>
    <property type="match status" value="1"/>
</dbReference>
<dbReference type="Pfam" id="PF23740">
    <property type="entry name" value="Ig_ZP2_3rd"/>
    <property type="match status" value="1"/>
</dbReference>
<dbReference type="Pfam" id="PF23738">
    <property type="entry name" value="Ig_ZP2_N"/>
    <property type="match status" value="1"/>
</dbReference>
<dbReference type="Pfam" id="PF00100">
    <property type="entry name" value="Zona_pellucida"/>
    <property type="match status" value="1"/>
</dbReference>
<dbReference type="Pfam" id="PF23344">
    <property type="entry name" value="ZP-N"/>
    <property type="match status" value="1"/>
</dbReference>
<dbReference type="PRINTS" id="PR00023">
    <property type="entry name" value="ZPELLUCIDA"/>
</dbReference>
<dbReference type="SMART" id="SM00241">
    <property type="entry name" value="ZP"/>
    <property type="match status" value="1"/>
</dbReference>
<dbReference type="PROSITE" id="PS00682">
    <property type="entry name" value="ZP_1"/>
    <property type="match status" value="1"/>
</dbReference>
<dbReference type="PROSITE" id="PS51034">
    <property type="entry name" value="ZP_2"/>
    <property type="match status" value="1"/>
</dbReference>
<protein>
    <recommendedName>
        <fullName>Zona pellucida sperm-binding protein 2</fullName>
    </recommendedName>
    <alternativeName>
        <fullName>Zona pellucida glycoprotein 2</fullName>
        <shortName>Zp-2</shortName>
    </alternativeName>
    <alternativeName>
        <fullName>Zona pellucida protein A</fullName>
    </alternativeName>
    <component>
        <recommendedName>
            <fullName>Processed zona pellucida sperm-binding protein 2</fullName>
        </recommendedName>
    </component>
</protein>
<organism>
    <name type="scientific">Macaca radiata</name>
    <name type="common">Bonnet macaque</name>
    <dbReference type="NCBI Taxonomy" id="9548"/>
    <lineage>
        <taxon>Eukaryota</taxon>
        <taxon>Metazoa</taxon>
        <taxon>Chordata</taxon>
        <taxon>Craniata</taxon>
        <taxon>Vertebrata</taxon>
        <taxon>Euteleostomi</taxon>
        <taxon>Mammalia</taxon>
        <taxon>Eutheria</taxon>
        <taxon>Euarchontoglires</taxon>
        <taxon>Primates</taxon>
        <taxon>Haplorrhini</taxon>
        <taxon>Catarrhini</taxon>
        <taxon>Cercopithecidae</taxon>
        <taxon>Cercopithecinae</taxon>
        <taxon>Macaca</taxon>
    </lineage>
</organism>
<reference key="1">
    <citation type="journal article" date="1998" name="Mol. Reprod. Dev.">
        <title>Molecular cloning and expression in Escherichia coli of cDNA encoding bonnet monkey (Macaca radiata) zona pellucida glycoprotein-ZP2.</title>
        <authorList>
            <person name="Jethanandani P."/>
            <person name="Santhanam R."/>
            <person name="Gupta S.K."/>
        </authorList>
    </citation>
    <scope>NUCLEOTIDE SEQUENCE [MRNA]</scope>
    <scope>TISSUE SPECIFICITY</scope>
    <scope>SUBCELLULAR LOCATION</scope>
    <source>
        <tissue>Ovary</tissue>
    </source>
</reference>
<accession>O77726</accession>
<comment type="function">
    <text evidence="2">Component of the zona pellucida, an extracellular matrix surrounding oocytes which mediates sperm binding, induction of the acrosome reaction and prevents post-fertilization polyspermy. The zona pellucida is composed of 3 to 4 glycoproteins, ZP1, ZP2, ZP3, and ZP4. ZP2 may act as a secondary sperm receptor.</text>
</comment>
<comment type="subunit">
    <text evidence="2 3">Can form homopolymers that assemble into long fibers (in vitro). Polymers of ZP2 and ZP3 organized into long filaments cross-linked by ZP1 homodimers. Interacts with ZP3.</text>
</comment>
<comment type="subcellular location">
    <molecule>Processed zona pellucida sperm-binding protein 2</molecule>
    <subcellularLocation>
        <location evidence="7">Zona pellucida</location>
    </subcellularLocation>
</comment>
<comment type="subcellular location">
    <subcellularLocation>
        <location evidence="2">Cell membrane</location>
        <topology evidence="2">Single-pass type I membrane protein</topology>
    </subcellularLocation>
</comment>
<comment type="tissue specificity">
    <text evidence="7">Expressed in oocytes (at protein level).</text>
</comment>
<comment type="domain">
    <text evidence="2">The ZP domain is involved in the polymerization of the ZP proteins to form the zona pellucida.</text>
</comment>
<comment type="PTM">
    <text evidence="2">Proteolytically cleaved before the transmembrane segment to yield the secreted ectodomain incorporated in the zona pellucida.</text>
</comment>
<comment type="PTM">
    <text evidence="2">Proteolytically cleaved in the N-terminal part by the metalloendopeptidase ASTL exocytosed from cortical granules after fertilization, yielding a N-terminal peptide of about 30 kDa which remains covalently attached to the C-terminal peptide via disulfide bond(s). This cleavage may play an important role in the post-fertilization block to polyspermy. Additional proteolytically cleavage of the N-terminal peptide of 30 kDa occurs in one-cell and two-cell embryos.</text>
</comment>
<comment type="PTM">
    <text evidence="2">N-glycosylated.</text>
</comment>
<comment type="PTM">
    <text evidence="2">O-glycosylated; contains sulfate-substituted glycans.</text>
</comment>
<comment type="similarity">
    <text evidence="8">Belongs to the ZP domain family. ZPA subfamily.</text>
</comment>
<gene>
    <name type="primary">ZP2</name>
    <name type="synonym">ZPA</name>
</gene>
<evidence type="ECO:0000250" key="1"/>
<evidence type="ECO:0000250" key="2">
    <source>
        <dbReference type="UniProtKB" id="P20239"/>
    </source>
</evidence>
<evidence type="ECO:0000250" key="3">
    <source>
        <dbReference type="UniProtKB" id="Q05996"/>
    </source>
</evidence>
<evidence type="ECO:0000255" key="4"/>
<evidence type="ECO:0000255" key="5">
    <source>
        <dbReference type="PROSITE-ProRule" id="PRU00375"/>
    </source>
</evidence>
<evidence type="ECO:0000256" key="6">
    <source>
        <dbReference type="SAM" id="MobiDB-lite"/>
    </source>
</evidence>
<evidence type="ECO:0000269" key="7">
    <source>
    </source>
</evidence>
<evidence type="ECO:0000305" key="8"/>
<feature type="signal peptide">
    <location>
        <begin position="1"/>
        <end position="38"/>
    </location>
</feature>
<feature type="chain" id="PRO_0000041691" description="Zona pellucida sperm-binding protein 2">
    <location>
        <begin position="39"/>
        <end position="640"/>
    </location>
</feature>
<feature type="chain" id="PRO_0000304560" description="Processed zona pellucida sperm-binding protein 2" evidence="1">
    <location>
        <begin position="39"/>
        <end status="unknown"/>
    </location>
</feature>
<feature type="propeptide" id="PRO_0000041692" description="Removed in mature form" evidence="2">
    <location>
        <begin position="641"/>
        <end position="745"/>
    </location>
</feature>
<feature type="topological domain" description="Extracellular" evidence="4">
    <location>
        <begin position="39"/>
        <end position="716"/>
    </location>
</feature>
<feature type="transmembrane region" description="Helical" evidence="4">
    <location>
        <begin position="717"/>
        <end position="736"/>
    </location>
</feature>
<feature type="topological domain" description="Cytoplasmic" evidence="4">
    <location>
        <begin position="737"/>
        <end position="745"/>
    </location>
</feature>
<feature type="domain" description="ZP" evidence="5">
    <location>
        <begin position="371"/>
        <end position="637"/>
    </location>
</feature>
<feature type="region of interest" description="Disordered" evidence="2">
    <location>
        <begin position="469"/>
        <end position="491"/>
    </location>
</feature>
<feature type="region of interest" description="Disordered" evidence="6">
    <location>
        <begin position="673"/>
        <end position="709"/>
    </location>
</feature>
<feature type="compositionally biased region" description="Basic and acidic residues" evidence="6">
    <location>
        <begin position="687"/>
        <end position="709"/>
    </location>
</feature>
<feature type="site" description="Cleavage; by ASTL" evidence="2">
    <location>
        <begin position="172"/>
        <end position="173"/>
    </location>
</feature>
<feature type="site" description="Cleavage" evidence="2">
    <location>
        <begin position="640"/>
        <end position="641"/>
    </location>
</feature>
<feature type="glycosylation site" description="N-linked (GlcNAc...) asparagine" evidence="4">
    <location>
        <position position="105"/>
    </location>
</feature>
<feature type="glycosylation site" description="N-linked (GlcNAc...) asparagine" evidence="4">
    <location>
        <position position="122"/>
    </location>
</feature>
<feature type="glycosylation site" description="N-linked (GlcNAc...) asparagine" evidence="4">
    <location>
        <position position="310"/>
    </location>
</feature>
<feature type="glycosylation site" description="O-linked (GalNAc...) threonine" evidence="1">
    <location>
        <position position="462"/>
    </location>
</feature>
<feature type="disulfide bond" evidence="2">
    <location>
        <begin position="55"/>
        <end position="138"/>
    </location>
</feature>
<feature type="disulfide bond" evidence="2">
    <location>
        <begin position="88"/>
        <end position="106"/>
    </location>
</feature>
<feature type="disulfide bond" evidence="2">
    <location>
        <begin position="372"/>
        <end position="465"/>
    </location>
</feature>
<feature type="disulfide bond" evidence="2">
    <location>
        <begin position="403"/>
        <end position="424"/>
    </location>
</feature>
<feature type="disulfide bond" evidence="2">
    <location>
        <begin position="545"/>
        <end position="615"/>
    </location>
</feature>
<feature type="disulfide bond" evidence="2">
    <location>
        <begin position="566"/>
        <end position="634"/>
    </location>
</feature>
<feature type="disulfide bond" evidence="2">
    <location>
        <begin position="620"/>
        <end position="630"/>
    </location>
</feature>
<name>ZP2_MACRA</name>
<sequence length="745" mass="82710">MACGQRGGSWRPSGWFNAGWSTYRSISLFFALVTSVNSIDVFQLVNPAFPGTVICDERGITVEFPSSPGTKKWHASVVDPLGLNVPNCTYILNPEKFTLRVTYENCTRRVHGGYQMTIRVMNDSAALRHGAVMYQFFCPAMQVEETQGLSASTICKKDFMSFSLPRVFSGLADDNKVTKLKMGWSIEVGDGARVKTLTLPEAMKEGFSLLIDNHRMIFHVPFNATGVTHYVQGNSHLYMVSLKLTFISPGQKVIFSSQAICAPDPVNCNATHMTLTIPEFPGKLKSVSFENQNIDVSQLHDNGIDLEATNGTKLHFSKTLLKTKLSEKCLLHQFYLASLRLTFLLQSETVSMVIYPECVCESPVSIVTGELCTQDGFMDFEVYSYQTQPALDLDTLRVGNSSCQPVFKAQSQGLVRFHIPLNGCGTRYKFEDDKVIYENEIHALWTDLPPSKISRDSEFRMTVKCSYSRNDMLLNINVESLTPPVASVKLGPFTLILQSYPDNSYQQPYGENEYPLVRFLRQPIYMEVRVINRDDPNIKLVLDDCWATSTMDPDSFPQWNIVVDGCAYELDNYQTTFHPVGSSVTHPDHYQRFDMKAFAFVSEAHVLSSLVYFHCSALICNRLSPDSPLCSVTCPVSSRHRRATEATEAEKMTVSLPGPILLLSDDSSFRGVGSSDLKASGSSGENSRSETGEEVGSRDVMDTKGHRTAGDVGSKAVAAVAALAGVVATLGFICYLYKKRTVSNH</sequence>
<proteinExistence type="evidence at protein level"/>
<keyword id="KW-1003">Cell membrane</keyword>
<keyword id="KW-0165">Cleavage on pair of basic residues</keyword>
<keyword id="KW-1015">Disulfide bond</keyword>
<keyword id="KW-0272">Extracellular matrix</keyword>
<keyword id="KW-0278">Fertilization</keyword>
<keyword id="KW-0325">Glycoprotein</keyword>
<keyword id="KW-0472">Membrane</keyword>
<keyword id="KW-0675">Receptor</keyword>
<keyword id="KW-0964">Secreted</keyword>
<keyword id="KW-0732">Signal</keyword>
<keyword id="KW-0812">Transmembrane</keyword>
<keyword id="KW-1133">Transmembrane helix</keyword>